<name>YGMH_SCHPO</name>
<reference key="1">
    <citation type="journal article" date="2002" name="Nature">
        <title>The genome sequence of Schizosaccharomyces pombe.</title>
        <authorList>
            <person name="Wood V."/>
            <person name="Gwilliam R."/>
            <person name="Rajandream M.A."/>
            <person name="Lyne M.H."/>
            <person name="Lyne R."/>
            <person name="Stewart A."/>
            <person name="Sgouros J.G."/>
            <person name="Peat N."/>
            <person name="Hayles J."/>
            <person name="Baker S.G."/>
            <person name="Basham D."/>
            <person name="Bowman S."/>
            <person name="Brooks K."/>
            <person name="Brown D."/>
            <person name="Brown S."/>
            <person name="Chillingworth T."/>
            <person name="Churcher C.M."/>
            <person name="Collins M."/>
            <person name="Connor R."/>
            <person name="Cronin A."/>
            <person name="Davis P."/>
            <person name="Feltwell T."/>
            <person name="Fraser A."/>
            <person name="Gentles S."/>
            <person name="Goble A."/>
            <person name="Hamlin N."/>
            <person name="Harris D.E."/>
            <person name="Hidalgo J."/>
            <person name="Hodgson G."/>
            <person name="Holroyd S."/>
            <person name="Hornsby T."/>
            <person name="Howarth S."/>
            <person name="Huckle E.J."/>
            <person name="Hunt S."/>
            <person name="Jagels K."/>
            <person name="James K.D."/>
            <person name="Jones L."/>
            <person name="Jones M."/>
            <person name="Leather S."/>
            <person name="McDonald S."/>
            <person name="McLean J."/>
            <person name="Mooney P."/>
            <person name="Moule S."/>
            <person name="Mungall K.L."/>
            <person name="Murphy L.D."/>
            <person name="Niblett D."/>
            <person name="Odell C."/>
            <person name="Oliver K."/>
            <person name="O'Neil S."/>
            <person name="Pearson D."/>
            <person name="Quail M.A."/>
            <person name="Rabbinowitsch E."/>
            <person name="Rutherford K.M."/>
            <person name="Rutter S."/>
            <person name="Saunders D."/>
            <person name="Seeger K."/>
            <person name="Sharp S."/>
            <person name="Skelton J."/>
            <person name="Simmonds M.N."/>
            <person name="Squares R."/>
            <person name="Squares S."/>
            <person name="Stevens K."/>
            <person name="Taylor K."/>
            <person name="Taylor R.G."/>
            <person name="Tivey A."/>
            <person name="Walsh S.V."/>
            <person name="Warren T."/>
            <person name="Whitehead S."/>
            <person name="Woodward J.R."/>
            <person name="Volckaert G."/>
            <person name="Aert R."/>
            <person name="Robben J."/>
            <person name="Grymonprez B."/>
            <person name="Weltjens I."/>
            <person name="Vanstreels E."/>
            <person name="Rieger M."/>
            <person name="Schaefer M."/>
            <person name="Mueller-Auer S."/>
            <person name="Gabel C."/>
            <person name="Fuchs M."/>
            <person name="Duesterhoeft A."/>
            <person name="Fritzc C."/>
            <person name="Holzer E."/>
            <person name="Moestl D."/>
            <person name="Hilbert H."/>
            <person name="Borzym K."/>
            <person name="Langer I."/>
            <person name="Beck A."/>
            <person name="Lehrach H."/>
            <person name="Reinhardt R."/>
            <person name="Pohl T.M."/>
            <person name="Eger P."/>
            <person name="Zimmermann W."/>
            <person name="Wedler H."/>
            <person name="Wambutt R."/>
            <person name="Purnelle B."/>
            <person name="Goffeau A."/>
            <person name="Cadieu E."/>
            <person name="Dreano S."/>
            <person name="Gloux S."/>
            <person name="Lelaure V."/>
            <person name="Mottier S."/>
            <person name="Galibert F."/>
            <person name="Aves S.J."/>
            <person name="Xiang Z."/>
            <person name="Hunt C."/>
            <person name="Moore K."/>
            <person name="Hurst S.M."/>
            <person name="Lucas M."/>
            <person name="Rochet M."/>
            <person name="Gaillardin C."/>
            <person name="Tallada V.A."/>
            <person name="Garzon A."/>
            <person name="Thode G."/>
            <person name="Daga R.R."/>
            <person name="Cruzado L."/>
            <person name="Jimenez J."/>
            <person name="Sanchez M."/>
            <person name="del Rey F."/>
            <person name="Benito J."/>
            <person name="Dominguez A."/>
            <person name="Revuelta J.L."/>
            <person name="Moreno S."/>
            <person name="Armstrong J."/>
            <person name="Forsburg S.L."/>
            <person name="Cerutti L."/>
            <person name="Lowe T."/>
            <person name="McCombie W.R."/>
            <person name="Paulsen I."/>
            <person name="Potashkin J."/>
            <person name="Shpakovski G.V."/>
            <person name="Ussery D."/>
            <person name="Barrell B.G."/>
            <person name="Nurse P."/>
        </authorList>
    </citation>
    <scope>NUCLEOTIDE SEQUENCE [LARGE SCALE GENOMIC DNA]</scope>
    <source>
        <strain>972 / ATCC 24843</strain>
    </source>
</reference>
<keyword id="KW-1185">Reference proteome</keyword>
<dbReference type="EMBL" id="CU329671">
    <property type="protein sequence ID" value="CAA17071.2"/>
    <property type="molecule type" value="Genomic_DNA"/>
</dbReference>
<dbReference type="PIR" id="T39848">
    <property type="entry name" value="T39848"/>
</dbReference>
<dbReference type="RefSeq" id="NP_595983.2">
    <property type="nucleotide sequence ID" value="NM_001021890.2"/>
</dbReference>
<dbReference type="SMR" id="O42965"/>
<dbReference type="BioGRID" id="277289">
    <property type="interactions" value="2"/>
</dbReference>
<dbReference type="FunCoup" id="O42965">
    <property type="interactions" value="124"/>
</dbReference>
<dbReference type="STRING" id="284812.O42965"/>
<dbReference type="PaxDb" id="4896-SPBC19G7.17.1"/>
<dbReference type="EnsemblFungi" id="SPBC19G7.17.1">
    <property type="protein sequence ID" value="SPBC19G7.17.1:pep"/>
    <property type="gene ID" value="SPBC19G7.17"/>
</dbReference>
<dbReference type="GeneID" id="2540769"/>
<dbReference type="KEGG" id="spo:2540769"/>
<dbReference type="PomBase" id="SPBC19G7.17"/>
<dbReference type="VEuPathDB" id="FungiDB:SPBC19G7.17"/>
<dbReference type="eggNOG" id="KOG1373">
    <property type="taxonomic scope" value="Eukaryota"/>
</dbReference>
<dbReference type="HOGENOM" id="CLU_031763_2_1_1"/>
<dbReference type="InParanoid" id="O42965"/>
<dbReference type="OMA" id="YTSAMPI"/>
<dbReference type="PhylomeDB" id="O42965"/>
<dbReference type="PRO" id="PR:O42965"/>
<dbReference type="Proteomes" id="UP000002485">
    <property type="component" value="Chromosome II"/>
</dbReference>
<dbReference type="GO" id="GO:0005784">
    <property type="term" value="C:Sec61 translocon complex"/>
    <property type="evidence" value="ECO:0000318"/>
    <property type="project" value="GO_Central"/>
</dbReference>
<dbReference type="GO" id="GO:0008320">
    <property type="term" value="F:protein transmembrane transporter activity"/>
    <property type="evidence" value="ECO:0000318"/>
    <property type="project" value="GO_Central"/>
</dbReference>
<dbReference type="GO" id="GO:0043022">
    <property type="term" value="F:ribosome binding"/>
    <property type="evidence" value="ECO:0000318"/>
    <property type="project" value="GO_Central"/>
</dbReference>
<dbReference type="GO" id="GO:0005048">
    <property type="term" value="F:signal sequence binding"/>
    <property type="evidence" value="ECO:0000318"/>
    <property type="project" value="GO_Central"/>
</dbReference>
<dbReference type="GO" id="GO:0031204">
    <property type="term" value="P:post-translational protein targeting to membrane, translocation"/>
    <property type="evidence" value="ECO:0000318"/>
    <property type="project" value="GO_Central"/>
</dbReference>
<dbReference type="GO" id="GO:0045048">
    <property type="term" value="P:protein insertion into ER membrane"/>
    <property type="evidence" value="ECO:0000305"/>
    <property type="project" value="PomBase"/>
</dbReference>
<dbReference type="GO" id="GO:0006616">
    <property type="term" value="P:SRP-dependent cotranslational protein targeting to membrane, translocation"/>
    <property type="evidence" value="ECO:0000318"/>
    <property type="project" value="GO_Central"/>
</dbReference>
<dbReference type="Gene3D" id="1.10.3370.10">
    <property type="entry name" value="SecY subunit domain"/>
    <property type="match status" value="1"/>
</dbReference>
<dbReference type="InterPro" id="IPR002208">
    <property type="entry name" value="SecY/SEC61-alpha"/>
</dbReference>
<dbReference type="InterPro" id="IPR023201">
    <property type="entry name" value="SecY_dom_sf"/>
</dbReference>
<dbReference type="InterPro" id="IPR019561">
    <property type="entry name" value="Translocon_Sec61/SecY_plug_dom"/>
</dbReference>
<dbReference type="PANTHER" id="PTHR10906">
    <property type="entry name" value="SECY/SEC61-ALPHA FAMILY MEMBER"/>
    <property type="match status" value="1"/>
</dbReference>
<dbReference type="Pfam" id="PF10559">
    <property type="entry name" value="Plug_translocon"/>
    <property type="match status" value="1"/>
</dbReference>
<dbReference type="Pfam" id="PF00344">
    <property type="entry name" value="SecY"/>
    <property type="match status" value="1"/>
</dbReference>
<dbReference type="PIRSF" id="PIRSF004557">
    <property type="entry name" value="SecY"/>
    <property type="match status" value="1"/>
</dbReference>
<dbReference type="SUPFAM" id="SSF103491">
    <property type="entry name" value="Preprotein translocase SecY subunit"/>
    <property type="match status" value="1"/>
</dbReference>
<gene>
    <name type="ORF">SPBC19G7.17</name>
    <name type="ORF">SPBC36B7.01</name>
</gene>
<organism>
    <name type="scientific">Schizosaccharomyces pombe (strain 972 / ATCC 24843)</name>
    <name type="common">Fission yeast</name>
    <dbReference type="NCBI Taxonomy" id="284812"/>
    <lineage>
        <taxon>Eukaryota</taxon>
        <taxon>Fungi</taxon>
        <taxon>Dikarya</taxon>
        <taxon>Ascomycota</taxon>
        <taxon>Taphrinomycotina</taxon>
        <taxon>Schizosaccharomycetes</taxon>
        <taxon>Schizosaccharomycetales</taxon>
        <taxon>Schizosaccharomycetaceae</taxon>
        <taxon>Schizosaccharomyces</taxon>
    </lineage>
</organism>
<protein>
    <recommendedName>
        <fullName>Uncharacterized protein C19G7.17</fullName>
    </recommendedName>
</protein>
<proteinExistence type="predicted"/>
<feature type="chain" id="PRO_0000116763" description="Uncharacterized protein C19G7.17">
    <location>
        <begin position="1"/>
        <end position="475"/>
    </location>
</feature>
<accession>O42965</accession>
<accession>Q9HGN9</accession>
<sequence>MGGARFINFIKPLSSLLPEVEGPKTHLELVEKLGWMAGCVVVYQILSIIPVYGAEKTDTLDPINNFRVLDGSSASGLMITGLAPIYLSSFLLQILASKKKIAVNFNLIIDRVLFQNAQKVVSALLYLILAVTYVSSGYYGSFSDLGIFRFIMLILQIFLPGIVCIYLCEIIEKGHGLGSGPVLLLGSHILGNIMWDVLSLHRYPVNESGDSQYQGALVGFAFNLFSFKNKFSSLRSILFRSEGLSFVQFLVCIAVFATFMYTLNIRIDVPIRSSRVRGVRQNFPLKLLYTSVIPLIYFYSILSHLLVFAYALYSLCPNSLITRLLVQYSPIDTFAEHKLQLVGGLVYFLYPPLGLSEALLHPVHTVIYTITLICITIYFSLLWMNATAGGPRDVLLFFKENQLVIAGYREATMLKELEKIIPIAAKLSAFFVSILSVIAGIFASTFGVGVLIASALVYASFEMIVGANTSLGNGN</sequence>